<organism>
    <name type="scientific">Ehrlichia chaffeensis (strain ATCC CRL-10679 / Arkansas)</name>
    <dbReference type="NCBI Taxonomy" id="205920"/>
    <lineage>
        <taxon>Bacteria</taxon>
        <taxon>Pseudomonadati</taxon>
        <taxon>Pseudomonadota</taxon>
        <taxon>Alphaproteobacteria</taxon>
        <taxon>Rickettsiales</taxon>
        <taxon>Anaplasmataceae</taxon>
        <taxon>Ehrlichia</taxon>
    </lineage>
</organism>
<protein>
    <recommendedName>
        <fullName evidence="1">Ribonuclease HII</fullName>
        <shortName evidence="1">RNase HII</shortName>
        <ecNumber evidence="1">3.1.26.4</ecNumber>
    </recommendedName>
</protein>
<gene>
    <name evidence="1" type="primary">rnhB</name>
    <name type="ordered locus">ECH_0946</name>
</gene>
<proteinExistence type="inferred from homology"/>
<keyword id="KW-0963">Cytoplasm</keyword>
<keyword id="KW-0255">Endonuclease</keyword>
<keyword id="KW-0378">Hydrolase</keyword>
<keyword id="KW-0464">Manganese</keyword>
<keyword id="KW-0479">Metal-binding</keyword>
<keyword id="KW-0540">Nuclease</keyword>
<keyword id="KW-1185">Reference proteome</keyword>
<dbReference type="EC" id="3.1.26.4" evidence="1"/>
<dbReference type="EMBL" id="CP000236">
    <property type="protein sequence ID" value="ABD45547.1"/>
    <property type="molecule type" value="Genomic_DNA"/>
</dbReference>
<dbReference type="RefSeq" id="WP_011452911.1">
    <property type="nucleotide sequence ID" value="NC_007799.1"/>
</dbReference>
<dbReference type="SMR" id="Q2GFP8"/>
<dbReference type="STRING" id="205920.ECH_0946"/>
<dbReference type="KEGG" id="ech:ECH_0946"/>
<dbReference type="eggNOG" id="COG0164">
    <property type="taxonomic scope" value="Bacteria"/>
</dbReference>
<dbReference type="HOGENOM" id="CLU_036532_3_2_5"/>
<dbReference type="OrthoDB" id="9803420at2"/>
<dbReference type="Proteomes" id="UP000008320">
    <property type="component" value="Chromosome"/>
</dbReference>
<dbReference type="GO" id="GO:0005737">
    <property type="term" value="C:cytoplasm"/>
    <property type="evidence" value="ECO:0007669"/>
    <property type="project" value="UniProtKB-SubCell"/>
</dbReference>
<dbReference type="GO" id="GO:0032299">
    <property type="term" value="C:ribonuclease H2 complex"/>
    <property type="evidence" value="ECO:0007669"/>
    <property type="project" value="TreeGrafter"/>
</dbReference>
<dbReference type="GO" id="GO:0030145">
    <property type="term" value="F:manganese ion binding"/>
    <property type="evidence" value="ECO:0007669"/>
    <property type="project" value="UniProtKB-UniRule"/>
</dbReference>
<dbReference type="GO" id="GO:0003723">
    <property type="term" value="F:RNA binding"/>
    <property type="evidence" value="ECO:0007669"/>
    <property type="project" value="InterPro"/>
</dbReference>
<dbReference type="GO" id="GO:0004523">
    <property type="term" value="F:RNA-DNA hybrid ribonuclease activity"/>
    <property type="evidence" value="ECO:0007669"/>
    <property type="project" value="UniProtKB-UniRule"/>
</dbReference>
<dbReference type="GO" id="GO:0043137">
    <property type="term" value="P:DNA replication, removal of RNA primer"/>
    <property type="evidence" value="ECO:0007669"/>
    <property type="project" value="TreeGrafter"/>
</dbReference>
<dbReference type="GO" id="GO:0006298">
    <property type="term" value="P:mismatch repair"/>
    <property type="evidence" value="ECO:0007669"/>
    <property type="project" value="TreeGrafter"/>
</dbReference>
<dbReference type="CDD" id="cd07182">
    <property type="entry name" value="RNase_HII_bacteria_HII_like"/>
    <property type="match status" value="1"/>
</dbReference>
<dbReference type="Gene3D" id="3.30.420.10">
    <property type="entry name" value="Ribonuclease H-like superfamily/Ribonuclease H"/>
    <property type="match status" value="1"/>
</dbReference>
<dbReference type="HAMAP" id="MF_00052_B">
    <property type="entry name" value="RNase_HII_B"/>
    <property type="match status" value="1"/>
</dbReference>
<dbReference type="InterPro" id="IPR022898">
    <property type="entry name" value="RNase_HII"/>
</dbReference>
<dbReference type="InterPro" id="IPR001352">
    <property type="entry name" value="RNase_HII/HIII"/>
</dbReference>
<dbReference type="InterPro" id="IPR024567">
    <property type="entry name" value="RNase_HII/HIII_dom"/>
</dbReference>
<dbReference type="InterPro" id="IPR012337">
    <property type="entry name" value="RNaseH-like_sf"/>
</dbReference>
<dbReference type="InterPro" id="IPR036397">
    <property type="entry name" value="RNaseH_sf"/>
</dbReference>
<dbReference type="NCBIfam" id="NF000595">
    <property type="entry name" value="PRK00015.1-3"/>
    <property type="match status" value="1"/>
</dbReference>
<dbReference type="PANTHER" id="PTHR10954">
    <property type="entry name" value="RIBONUCLEASE H2 SUBUNIT A"/>
    <property type="match status" value="1"/>
</dbReference>
<dbReference type="PANTHER" id="PTHR10954:SF18">
    <property type="entry name" value="RIBONUCLEASE HII"/>
    <property type="match status" value="1"/>
</dbReference>
<dbReference type="Pfam" id="PF01351">
    <property type="entry name" value="RNase_HII"/>
    <property type="match status" value="1"/>
</dbReference>
<dbReference type="SUPFAM" id="SSF53098">
    <property type="entry name" value="Ribonuclease H-like"/>
    <property type="match status" value="1"/>
</dbReference>
<dbReference type="PROSITE" id="PS51975">
    <property type="entry name" value="RNASE_H_2"/>
    <property type="match status" value="1"/>
</dbReference>
<accession>Q2GFP8</accession>
<comment type="function">
    <text evidence="1">Endonuclease that specifically degrades the RNA of RNA-DNA hybrids.</text>
</comment>
<comment type="catalytic activity">
    <reaction evidence="1">
        <text>Endonucleolytic cleavage to 5'-phosphomonoester.</text>
        <dbReference type="EC" id="3.1.26.4"/>
    </reaction>
</comment>
<comment type="cofactor">
    <cofactor evidence="1">
        <name>Mn(2+)</name>
        <dbReference type="ChEBI" id="CHEBI:29035"/>
    </cofactor>
    <cofactor evidence="1">
        <name>Mg(2+)</name>
        <dbReference type="ChEBI" id="CHEBI:18420"/>
    </cofactor>
    <text evidence="1">Manganese or magnesium. Binds 1 divalent metal ion per monomer in the absence of substrate. May bind a second metal ion after substrate binding.</text>
</comment>
<comment type="subcellular location">
    <subcellularLocation>
        <location evidence="1">Cytoplasm</location>
    </subcellularLocation>
</comment>
<comment type="similarity">
    <text evidence="1">Belongs to the RNase HII family.</text>
</comment>
<reference key="1">
    <citation type="journal article" date="2006" name="PLoS Genet.">
        <title>Comparative genomics of emerging human ehrlichiosis agents.</title>
        <authorList>
            <person name="Dunning Hotopp J.C."/>
            <person name="Lin M."/>
            <person name="Madupu R."/>
            <person name="Crabtree J."/>
            <person name="Angiuoli S.V."/>
            <person name="Eisen J.A."/>
            <person name="Seshadri R."/>
            <person name="Ren Q."/>
            <person name="Wu M."/>
            <person name="Utterback T.R."/>
            <person name="Smith S."/>
            <person name="Lewis M."/>
            <person name="Khouri H."/>
            <person name="Zhang C."/>
            <person name="Niu H."/>
            <person name="Lin Q."/>
            <person name="Ohashi N."/>
            <person name="Zhi N."/>
            <person name="Nelson W.C."/>
            <person name="Brinkac L.M."/>
            <person name="Dodson R.J."/>
            <person name="Rosovitz M.J."/>
            <person name="Sundaram J.P."/>
            <person name="Daugherty S.C."/>
            <person name="Davidsen T."/>
            <person name="Durkin A.S."/>
            <person name="Gwinn M.L."/>
            <person name="Haft D.H."/>
            <person name="Selengut J.D."/>
            <person name="Sullivan S.A."/>
            <person name="Zafar N."/>
            <person name="Zhou L."/>
            <person name="Benahmed F."/>
            <person name="Forberger H."/>
            <person name="Halpin R."/>
            <person name="Mulligan S."/>
            <person name="Robinson J."/>
            <person name="White O."/>
            <person name="Rikihisa Y."/>
            <person name="Tettelin H."/>
        </authorList>
    </citation>
    <scope>NUCLEOTIDE SEQUENCE [LARGE SCALE GENOMIC DNA]</scope>
    <source>
        <strain>ATCC CRL-10679 / Arkansas</strain>
    </source>
</reference>
<evidence type="ECO:0000255" key="1">
    <source>
        <dbReference type="HAMAP-Rule" id="MF_00052"/>
    </source>
</evidence>
<evidence type="ECO:0000255" key="2">
    <source>
        <dbReference type="PROSITE-ProRule" id="PRU01319"/>
    </source>
</evidence>
<feature type="chain" id="PRO_1000031139" description="Ribonuclease HII">
    <location>
        <begin position="1"/>
        <end position="209"/>
    </location>
</feature>
<feature type="domain" description="RNase H type-2" evidence="2">
    <location>
        <begin position="19"/>
        <end position="209"/>
    </location>
</feature>
<feature type="binding site" evidence="1">
    <location>
        <position position="25"/>
    </location>
    <ligand>
        <name>a divalent metal cation</name>
        <dbReference type="ChEBI" id="CHEBI:60240"/>
    </ligand>
</feature>
<feature type="binding site" evidence="1">
    <location>
        <position position="26"/>
    </location>
    <ligand>
        <name>a divalent metal cation</name>
        <dbReference type="ChEBI" id="CHEBI:60240"/>
    </ligand>
</feature>
<feature type="binding site" evidence="1">
    <location>
        <position position="118"/>
    </location>
    <ligand>
        <name>a divalent metal cation</name>
        <dbReference type="ChEBI" id="CHEBI:60240"/>
    </ligand>
</feature>
<name>RNH2_EHRCR</name>
<sequence length="209" mass="23498">MPDFSIENEISKLINNKHCTIVGVDEVGYGSLAGPVVSAAVFFPKHDNHITYNIQDSKKLTPKKRLEIYNIITPMVKWSIGLAEVHEIDQYNILNATHIAMQRALRGLNSNIDYVIVDGNKVPELPWNAKAVVDGDNISISIAAASIIAKVTRDKLMETLHIQFPQYNWNKNKGYGTKHHLESLHKYGKTIHHRNTFAPASGITKLYNK</sequence>